<reference key="1">
    <citation type="submission" date="2009-01" db="EMBL/GenBank/DDBJ databases">
        <title>Complete sequence of Diaphorobacter sp. TPSY.</title>
        <authorList>
            <consortium name="US DOE Joint Genome Institute"/>
            <person name="Lucas S."/>
            <person name="Copeland A."/>
            <person name="Lapidus A."/>
            <person name="Glavina del Rio T."/>
            <person name="Tice H."/>
            <person name="Bruce D."/>
            <person name="Goodwin L."/>
            <person name="Pitluck S."/>
            <person name="Chertkov O."/>
            <person name="Brettin T."/>
            <person name="Detter J.C."/>
            <person name="Han C."/>
            <person name="Larimer F."/>
            <person name="Land M."/>
            <person name="Hauser L."/>
            <person name="Kyrpides N."/>
            <person name="Mikhailova N."/>
            <person name="Coates J.D."/>
        </authorList>
    </citation>
    <scope>NUCLEOTIDE SEQUENCE [LARGE SCALE GENOMIC DNA]</scope>
    <source>
        <strain>TPSY</strain>
    </source>
</reference>
<evidence type="ECO:0000255" key="1">
    <source>
        <dbReference type="HAMAP-Rule" id="MF_01631"/>
    </source>
</evidence>
<protein>
    <recommendedName>
        <fullName evidence="1">Bifunctional protein GlmU</fullName>
    </recommendedName>
    <domain>
        <recommendedName>
            <fullName evidence="1">UDP-N-acetylglucosamine pyrophosphorylase</fullName>
            <ecNumber evidence="1">2.7.7.23</ecNumber>
        </recommendedName>
        <alternativeName>
            <fullName evidence="1">N-acetylglucosamine-1-phosphate uridyltransferase</fullName>
        </alternativeName>
    </domain>
    <domain>
        <recommendedName>
            <fullName evidence="1">Glucosamine-1-phosphate N-acetyltransferase</fullName>
            <ecNumber evidence="1">2.3.1.157</ecNumber>
        </recommendedName>
    </domain>
</protein>
<keyword id="KW-0012">Acyltransferase</keyword>
<keyword id="KW-0133">Cell shape</keyword>
<keyword id="KW-0961">Cell wall biogenesis/degradation</keyword>
<keyword id="KW-0963">Cytoplasm</keyword>
<keyword id="KW-0460">Magnesium</keyword>
<keyword id="KW-0479">Metal-binding</keyword>
<keyword id="KW-0511">Multifunctional enzyme</keyword>
<keyword id="KW-0548">Nucleotidyltransferase</keyword>
<keyword id="KW-0573">Peptidoglycan synthesis</keyword>
<keyword id="KW-1185">Reference proteome</keyword>
<keyword id="KW-0677">Repeat</keyword>
<keyword id="KW-0808">Transferase</keyword>
<feature type="chain" id="PRO_1000186440" description="Bifunctional protein GlmU">
    <location>
        <begin position="1"/>
        <end position="476"/>
    </location>
</feature>
<feature type="region of interest" description="Pyrophosphorylase" evidence="1">
    <location>
        <begin position="1"/>
        <end position="235"/>
    </location>
</feature>
<feature type="region of interest" description="Linker" evidence="1">
    <location>
        <begin position="236"/>
        <end position="256"/>
    </location>
</feature>
<feature type="region of interest" description="N-acetyltransferase" evidence="1">
    <location>
        <begin position="257"/>
        <end position="476"/>
    </location>
</feature>
<feature type="active site" description="Proton acceptor" evidence="1">
    <location>
        <position position="381"/>
    </location>
</feature>
<feature type="binding site" evidence="1">
    <location>
        <position position="23"/>
    </location>
    <ligand>
        <name>UDP-N-acetyl-alpha-D-glucosamine</name>
        <dbReference type="ChEBI" id="CHEBI:57705"/>
    </ligand>
</feature>
<feature type="binding site" evidence="1">
    <location>
        <position position="81"/>
    </location>
    <ligand>
        <name>UDP-N-acetyl-alpha-D-glucosamine</name>
        <dbReference type="ChEBI" id="CHEBI:57705"/>
    </ligand>
</feature>
<feature type="binding site" evidence="1">
    <location>
        <begin position="86"/>
        <end position="87"/>
    </location>
    <ligand>
        <name>UDP-N-acetyl-alpha-D-glucosamine</name>
        <dbReference type="ChEBI" id="CHEBI:57705"/>
    </ligand>
</feature>
<feature type="binding site" evidence="1">
    <location>
        <begin position="108"/>
        <end position="110"/>
    </location>
    <ligand>
        <name>UDP-N-acetyl-alpha-D-glucosamine</name>
        <dbReference type="ChEBI" id="CHEBI:57705"/>
    </ligand>
</feature>
<feature type="binding site" evidence="1">
    <location>
        <position position="110"/>
    </location>
    <ligand>
        <name>Mg(2+)</name>
        <dbReference type="ChEBI" id="CHEBI:18420"/>
    </ligand>
</feature>
<feature type="binding site" evidence="1">
    <location>
        <position position="145"/>
    </location>
    <ligand>
        <name>UDP-N-acetyl-alpha-D-glucosamine</name>
        <dbReference type="ChEBI" id="CHEBI:57705"/>
    </ligand>
</feature>
<feature type="binding site" evidence="1">
    <location>
        <position position="160"/>
    </location>
    <ligand>
        <name>UDP-N-acetyl-alpha-D-glucosamine</name>
        <dbReference type="ChEBI" id="CHEBI:57705"/>
    </ligand>
</feature>
<feature type="binding site" evidence="1">
    <location>
        <position position="233"/>
    </location>
    <ligand>
        <name>Mg(2+)</name>
        <dbReference type="ChEBI" id="CHEBI:18420"/>
    </ligand>
</feature>
<feature type="binding site" evidence="1">
    <location>
        <position position="233"/>
    </location>
    <ligand>
        <name>UDP-N-acetyl-alpha-D-glucosamine</name>
        <dbReference type="ChEBI" id="CHEBI:57705"/>
    </ligand>
</feature>
<feature type="binding site" evidence="1">
    <location>
        <position position="351"/>
    </location>
    <ligand>
        <name>UDP-N-acetyl-alpha-D-glucosamine</name>
        <dbReference type="ChEBI" id="CHEBI:57705"/>
    </ligand>
</feature>
<feature type="binding site" evidence="1">
    <location>
        <position position="369"/>
    </location>
    <ligand>
        <name>UDP-N-acetyl-alpha-D-glucosamine</name>
        <dbReference type="ChEBI" id="CHEBI:57705"/>
    </ligand>
</feature>
<feature type="binding site" evidence="1">
    <location>
        <position position="384"/>
    </location>
    <ligand>
        <name>UDP-N-acetyl-alpha-D-glucosamine</name>
        <dbReference type="ChEBI" id="CHEBI:57705"/>
    </ligand>
</feature>
<feature type="binding site" evidence="1">
    <location>
        <position position="395"/>
    </location>
    <ligand>
        <name>UDP-N-acetyl-alpha-D-glucosamine</name>
        <dbReference type="ChEBI" id="CHEBI:57705"/>
    </ligand>
</feature>
<feature type="binding site" evidence="1">
    <location>
        <position position="398"/>
    </location>
    <ligand>
        <name>acetyl-CoA</name>
        <dbReference type="ChEBI" id="CHEBI:57288"/>
    </ligand>
</feature>
<feature type="binding site" evidence="1">
    <location>
        <begin position="404"/>
        <end position="405"/>
    </location>
    <ligand>
        <name>acetyl-CoA</name>
        <dbReference type="ChEBI" id="CHEBI:57288"/>
    </ligand>
</feature>
<feature type="binding site" evidence="1">
    <location>
        <position position="423"/>
    </location>
    <ligand>
        <name>acetyl-CoA</name>
        <dbReference type="ChEBI" id="CHEBI:57288"/>
    </ligand>
</feature>
<feature type="binding site" evidence="1">
    <location>
        <position position="441"/>
    </location>
    <ligand>
        <name>acetyl-CoA</name>
        <dbReference type="ChEBI" id="CHEBI:57288"/>
    </ligand>
</feature>
<feature type="binding site" evidence="1">
    <location>
        <position position="458"/>
    </location>
    <ligand>
        <name>acetyl-CoA</name>
        <dbReference type="ChEBI" id="CHEBI:57288"/>
    </ligand>
</feature>
<organism>
    <name type="scientific">Acidovorax ebreus (strain TPSY)</name>
    <name type="common">Diaphorobacter sp. (strain TPSY)</name>
    <dbReference type="NCBI Taxonomy" id="535289"/>
    <lineage>
        <taxon>Bacteria</taxon>
        <taxon>Pseudomonadati</taxon>
        <taxon>Pseudomonadota</taxon>
        <taxon>Betaproteobacteria</taxon>
        <taxon>Burkholderiales</taxon>
        <taxon>Comamonadaceae</taxon>
        <taxon>Diaphorobacter</taxon>
    </lineage>
</organism>
<name>GLMU_ACIET</name>
<sequence length="476" mass="49140">MTALDIIIMAAGKGTRMKSRIPKVLQRLAGRPLLHHVLGQAASLQARRVVVVTGHGATEVEAACAGLAGAGGTFDLKFVRQEPQLGTGHAVQQATPALAGDGTVVVLSGDVPLTQAATLRALVEAGAGERLALLTVRLPNPTGYGRIVRGEGGTVQRIVEHKDANDAERAIDEVYSGIMAVPAQRLAGWLARLTNDNAQGEYYLTDIVSMAVADGVPVAAHCIGDALQVAGVNSPAQLAELERAHQRAQAAALMEQGVRLADPARFDLRDDARSGARGEILCAQDVEIDVGCIFTGRVELGEGARIGAYCHISNATIAAGAVVHPFTHIDGEKAGAHVGEGALIGPFARLRPGAQLGREVHIGNFVEVKNSTLADGAKANHLAYLGDASVGERVNYGAGSITANYDGANKHRTVIEADVHIGSNCVLVAPVTIGAGGTVGGGSTITKDTPPGGLSVARGRQVSIANWKRPAKQAKG</sequence>
<dbReference type="EC" id="2.7.7.23" evidence="1"/>
<dbReference type="EC" id="2.3.1.157" evidence="1"/>
<dbReference type="EMBL" id="CP001392">
    <property type="protein sequence ID" value="ACM32095.1"/>
    <property type="molecule type" value="Genomic_DNA"/>
</dbReference>
<dbReference type="RefSeq" id="WP_012655627.1">
    <property type="nucleotide sequence ID" value="NC_011992.1"/>
</dbReference>
<dbReference type="SMR" id="B9MD63"/>
<dbReference type="KEGG" id="dia:Dtpsy_0615"/>
<dbReference type="eggNOG" id="COG1207">
    <property type="taxonomic scope" value="Bacteria"/>
</dbReference>
<dbReference type="HOGENOM" id="CLU_029499_15_2_4"/>
<dbReference type="UniPathway" id="UPA00113">
    <property type="reaction ID" value="UER00532"/>
</dbReference>
<dbReference type="UniPathway" id="UPA00113">
    <property type="reaction ID" value="UER00533"/>
</dbReference>
<dbReference type="UniPathway" id="UPA00973"/>
<dbReference type="Proteomes" id="UP000000450">
    <property type="component" value="Chromosome"/>
</dbReference>
<dbReference type="GO" id="GO:0005737">
    <property type="term" value="C:cytoplasm"/>
    <property type="evidence" value="ECO:0007669"/>
    <property type="project" value="UniProtKB-SubCell"/>
</dbReference>
<dbReference type="GO" id="GO:0016020">
    <property type="term" value="C:membrane"/>
    <property type="evidence" value="ECO:0007669"/>
    <property type="project" value="GOC"/>
</dbReference>
<dbReference type="GO" id="GO:0019134">
    <property type="term" value="F:glucosamine-1-phosphate N-acetyltransferase activity"/>
    <property type="evidence" value="ECO:0007669"/>
    <property type="project" value="UniProtKB-UniRule"/>
</dbReference>
<dbReference type="GO" id="GO:0000287">
    <property type="term" value="F:magnesium ion binding"/>
    <property type="evidence" value="ECO:0007669"/>
    <property type="project" value="UniProtKB-UniRule"/>
</dbReference>
<dbReference type="GO" id="GO:0003977">
    <property type="term" value="F:UDP-N-acetylglucosamine diphosphorylase activity"/>
    <property type="evidence" value="ECO:0007669"/>
    <property type="project" value="UniProtKB-UniRule"/>
</dbReference>
<dbReference type="GO" id="GO:0000902">
    <property type="term" value="P:cell morphogenesis"/>
    <property type="evidence" value="ECO:0007669"/>
    <property type="project" value="UniProtKB-UniRule"/>
</dbReference>
<dbReference type="GO" id="GO:0071555">
    <property type="term" value="P:cell wall organization"/>
    <property type="evidence" value="ECO:0007669"/>
    <property type="project" value="UniProtKB-KW"/>
</dbReference>
<dbReference type="GO" id="GO:0009245">
    <property type="term" value="P:lipid A biosynthetic process"/>
    <property type="evidence" value="ECO:0007669"/>
    <property type="project" value="UniProtKB-UniRule"/>
</dbReference>
<dbReference type="GO" id="GO:0009252">
    <property type="term" value="P:peptidoglycan biosynthetic process"/>
    <property type="evidence" value="ECO:0007669"/>
    <property type="project" value="UniProtKB-UniRule"/>
</dbReference>
<dbReference type="GO" id="GO:0008360">
    <property type="term" value="P:regulation of cell shape"/>
    <property type="evidence" value="ECO:0007669"/>
    <property type="project" value="UniProtKB-KW"/>
</dbReference>
<dbReference type="GO" id="GO:0006048">
    <property type="term" value="P:UDP-N-acetylglucosamine biosynthetic process"/>
    <property type="evidence" value="ECO:0007669"/>
    <property type="project" value="UniProtKB-UniPathway"/>
</dbReference>
<dbReference type="CDD" id="cd02540">
    <property type="entry name" value="GT2_GlmU_N_bac"/>
    <property type="match status" value="1"/>
</dbReference>
<dbReference type="CDD" id="cd03353">
    <property type="entry name" value="LbH_GlmU_C"/>
    <property type="match status" value="1"/>
</dbReference>
<dbReference type="Gene3D" id="2.160.10.10">
    <property type="entry name" value="Hexapeptide repeat proteins"/>
    <property type="match status" value="1"/>
</dbReference>
<dbReference type="Gene3D" id="3.90.550.10">
    <property type="entry name" value="Spore Coat Polysaccharide Biosynthesis Protein SpsA, Chain A"/>
    <property type="match status" value="1"/>
</dbReference>
<dbReference type="HAMAP" id="MF_01631">
    <property type="entry name" value="GlmU"/>
    <property type="match status" value="1"/>
</dbReference>
<dbReference type="InterPro" id="IPR005882">
    <property type="entry name" value="Bifunctional_GlmU"/>
</dbReference>
<dbReference type="InterPro" id="IPR050065">
    <property type="entry name" value="GlmU-like"/>
</dbReference>
<dbReference type="InterPro" id="IPR038009">
    <property type="entry name" value="GlmU_C_LbH"/>
</dbReference>
<dbReference type="InterPro" id="IPR001451">
    <property type="entry name" value="Hexapep"/>
</dbReference>
<dbReference type="InterPro" id="IPR025877">
    <property type="entry name" value="MobA-like_NTP_Trfase"/>
</dbReference>
<dbReference type="InterPro" id="IPR029044">
    <property type="entry name" value="Nucleotide-diphossugar_trans"/>
</dbReference>
<dbReference type="InterPro" id="IPR011004">
    <property type="entry name" value="Trimer_LpxA-like_sf"/>
</dbReference>
<dbReference type="NCBIfam" id="TIGR01173">
    <property type="entry name" value="glmU"/>
    <property type="match status" value="1"/>
</dbReference>
<dbReference type="PANTHER" id="PTHR43584:SF3">
    <property type="entry name" value="BIFUNCTIONAL PROTEIN GLMU"/>
    <property type="match status" value="1"/>
</dbReference>
<dbReference type="PANTHER" id="PTHR43584">
    <property type="entry name" value="NUCLEOTIDYL TRANSFERASE"/>
    <property type="match status" value="1"/>
</dbReference>
<dbReference type="Pfam" id="PF00132">
    <property type="entry name" value="Hexapep"/>
    <property type="match status" value="2"/>
</dbReference>
<dbReference type="Pfam" id="PF12804">
    <property type="entry name" value="NTP_transf_3"/>
    <property type="match status" value="1"/>
</dbReference>
<dbReference type="SUPFAM" id="SSF53448">
    <property type="entry name" value="Nucleotide-diphospho-sugar transferases"/>
    <property type="match status" value="1"/>
</dbReference>
<dbReference type="SUPFAM" id="SSF51161">
    <property type="entry name" value="Trimeric LpxA-like enzymes"/>
    <property type="match status" value="1"/>
</dbReference>
<accession>B9MD63</accession>
<proteinExistence type="inferred from homology"/>
<gene>
    <name evidence="1" type="primary">glmU</name>
    <name type="ordered locus">Dtpsy_0615</name>
</gene>
<comment type="function">
    <text evidence="1">Catalyzes the last two sequential reactions in the de novo biosynthetic pathway for UDP-N-acetylglucosamine (UDP-GlcNAc). The C-terminal domain catalyzes the transfer of acetyl group from acetyl coenzyme A to glucosamine-1-phosphate (GlcN-1-P) to produce N-acetylglucosamine-1-phosphate (GlcNAc-1-P), which is converted into UDP-GlcNAc by the transfer of uridine 5-monophosphate (from uridine 5-triphosphate), a reaction catalyzed by the N-terminal domain.</text>
</comment>
<comment type="catalytic activity">
    <reaction evidence="1">
        <text>alpha-D-glucosamine 1-phosphate + acetyl-CoA = N-acetyl-alpha-D-glucosamine 1-phosphate + CoA + H(+)</text>
        <dbReference type="Rhea" id="RHEA:13725"/>
        <dbReference type="ChEBI" id="CHEBI:15378"/>
        <dbReference type="ChEBI" id="CHEBI:57287"/>
        <dbReference type="ChEBI" id="CHEBI:57288"/>
        <dbReference type="ChEBI" id="CHEBI:57776"/>
        <dbReference type="ChEBI" id="CHEBI:58516"/>
        <dbReference type="EC" id="2.3.1.157"/>
    </reaction>
</comment>
<comment type="catalytic activity">
    <reaction evidence="1">
        <text>N-acetyl-alpha-D-glucosamine 1-phosphate + UTP + H(+) = UDP-N-acetyl-alpha-D-glucosamine + diphosphate</text>
        <dbReference type="Rhea" id="RHEA:13509"/>
        <dbReference type="ChEBI" id="CHEBI:15378"/>
        <dbReference type="ChEBI" id="CHEBI:33019"/>
        <dbReference type="ChEBI" id="CHEBI:46398"/>
        <dbReference type="ChEBI" id="CHEBI:57705"/>
        <dbReference type="ChEBI" id="CHEBI:57776"/>
        <dbReference type="EC" id="2.7.7.23"/>
    </reaction>
</comment>
<comment type="cofactor">
    <cofactor evidence="1">
        <name>Mg(2+)</name>
        <dbReference type="ChEBI" id="CHEBI:18420"/>
    </cofactor>
    <text evidence="1">Binds 1 Mg(2+) ion per subunit.</text>
</comment>
<comment type="pathway">
    <text evidence="1">Nucleotide-sugar biosynthesis; UDP-N-acetyl-alpha-D-glucosamine biosynthesis; N-acetyl-alpha-D-glucosamine 1-phosphate from alpha-D-glucosamine 6-phosphate (route II): step 2/2.</text>
</comment>
<comment type="pathway">
    <text evidence="1">Nucleotide-sugar biosynthesis; UDP-N-acetyl-alpha-D-glucosamine biosynthesis; UDP-N-acetyl-alpha-D-glucosamine from N-acetyl-alpha-D-glucosamine 1-phosphate: step 1/1.</text>
</comment>
<comment type="pathway">
    <text evidence="1">Bacterial outer membrane biogenesis; LPS lipid A biosynthesis.</text>
</comment>
<comment type="subunit">
    <text evidence="1">Homotrimer.</text>
</comment>
<comment type="subcellular location">
    <subcellularLocation>
        <location evidence="1">Cytoplasm</location>
    </subcellularLocation>
</comment>
<comment type="similarity">
    <text evidence="1">In the N-terminal section; belongs to the N-acetylglucosamine-1-phosphate uridyltransferase family.</text>
</comment>
<comment type="similarity">
    <text evidence="1">In the C-terminal section; belongs to the transferase hexapeptide repeat family.</text>
</comment>